<organism>
    <name type="scientific">Idiomarina loihiensis (strain ATCC BAA-735 / DSM 15497 / L2-TR)</name>
    <dbReference type="NCBI Taxonomy" id="283942"/>
    <lineage>
        <taxon>Bacteria</taxon>
        <taxon>Pseudomonadati</taxon>
        <taxon>Pseudomonadota</taxon>
        <taxon>Gammaproteobacteria</taxon>
        <taxon>Alteromonadales</taxon>
        <taxon>Idiomarinaceae</taxon>
        <taxon>Idiomarina</taxon>
    </lineage>
</organism>
<evidence type="ECO:0000255" key="1">
    <source>
        <dbReference type="HAMAP-Rule" id="MF_00123"/>
    </source>
</evidence>
<dbReference type="EC" id="6.1.1.19" evidence="1"/>
<dbReference type="EMBL" id="AE017340">
    <property type="protein sequence ID" value="AAV83292.1"/>
    <property type="molecule type" value="Genomic_DNA"/>
</dbReference>
<dbReference type="RefSeq" id="WP_011235685.1">
    <property type="nucleotide sequence ID" value="NC_006512.1"/>
</dbReference>
<dbReference type="SMR" id="Q5QV46"/>
<dbReference type="STRING" id="283942.IL2460"/>
<dbReference type="GeneID" id="41337654"/>
<dbReference type="KEGG" id="ilo:IL2460"/>
<dbReference type="eggNOG" id="COG0018">
    <property type="taxonomic scope" value="Bacteria"/>
</dbReference>
<dbReference type="HOGENOM" id="CLU_006406_5_1_6"/>
<dbReference type="OrthoDB" id="9803211at2"/>
<dbReference type="Proteomes" id="UP000001171">
    <property type="component" value="Chromosome"/>
</dbReference>
<dbReference type="GO" id="GO:0005737">
    <property type="term" value="C:cytoplasm"/>
    <property type="evidence" value="ECO:0007669"/>
    <property type="project" value="UniProtKB-SubCell"/>
</dbReference>
<dbReference type="GO" id="GO:0004814">
    <property type="term" value="F:arginine-tRNA ligase activity"/>
    <property type="evidence" value="ECO:0007669"/>
    <property type="project" value="UniProtKB-UniRule"/>
</dbReference>
<dbReference type="GO" id="GO:0005524">
    <property type="term" value="F:ATP binding"/>
    <property type="evidence" value="ECO:0007669"/>
    <property type="project" value="UniProtKB-UniRule"/>
</dbReference>
<dbReference type="GO" id="GO:0006420">
    <property type="term" value="P:arginyl-tRNA aminoacylation"/>
    <property type="evidence" value="ECO:0007669"/>
    <property type="project" value="UniProtKB-UniRule"/>
</dbReference>
<dbReference type="CDD" id="cd07956">
    <property type="entry name" value="Anticodon_Ia_Arg"/>
    <property type="match status" value="1"/>
</dbReference>
<dbReference type="CDD" id="cd00671">
    <property type="entry name" value="ArgRS_core"/>
    <property type="match status" value="1"/>
</dbReference>
<dbReference type="FunFam" id="3.30.1360.70:FF:000003">
    <property type="entry name" value="Arginine--tRNA ligase"/>
    <property type="match status" value="1"/>
</dbReference>
<dbReference type="FunFam" id="3.40.50.620:FF:000030">
    <property type="entry name" value="Arginine--tRNA ligase"/>
    <property type="match status" value="1"/>
</dbReference>
<dbReference type="FunFam" id="1.10.730.10:FF:000006">
    <property type="entry name" value="Arginyl-tRNA synthetase 2, mitochondrial"/>
    <property type="match status" value="1"/>
</dbReference>
<dbReference type="Gene3D" id="3.30.1360.70">
    <property type="entry name" value="Arginyl tRNA synthetase N-terminal domain"/>
    <property type="match status" value="1"/>
</dbReference>
<dbReference type="Gene3D" id="3.40.50.620">
    <property type="entry name" value="HUPs"/>
    <property type="match status" value="1"/>
</dbReference>
<dbReference type="Gene3D" id="1.10.730.10">
    <property type="entry name" value="Isoleucyl-tRNA Synthetase, Domain 1"/>
    <property type="match status" value="1"/>
</dbReference>
<dbReference type="HAMAP" id="MF_00123">
    <property type="entry name" value="Arg_tRNA_synth"/>
    <property type="match status" value="1"/>
</dbReference>
<dbReference type="InterPro" id="IPR001412">
    <property type="entry name" value="aa-tRNA-synth_I_CS"/>
</dbReference>
<dbReference type="InterPro" id="IPR001278">
    <property type="entry name" value="Arg-tRNA-ligase"/>
</dbReference>
<dbReference type="InterPro" id="IPR005148">
    <property type="entry name" value="Arg-tRNA-synth_N"/>
</dbReference>
<dbReference type="InterPro" id="IPR036695">
    <property type="entry name" value="Arg-tRNA-synth_N_sf"/>
</dbReference>
<dbReference type="InterPro" id="IPR035684">
    <property type="entry name" value="ArgRS_core"/>
</dbReference>
<dbReference type="InterPro" id="IPR008909">
    <property type="entry name" value="DALR_anticod-bd"/>
</dbReference>
<dbReference type="InterPro" id="IPR014729">
    <property type="entry name" value="Rossmann-like_a/b/a_fold"/>
</dbReference>
<dbReference type="InterPro" id="IPR009080">
    <property type="entry name" value="tRNAsynth_Ia_anticodon-bd"/>
</dbReference>
<dbReference type="NCBIfam" id="TIGR00456">
    <property type="entry name" value="argS"/>
    <property type="match status" value="1"/>
</dbReference>
<dbReference type="PANTHER" id="PTHR11956:SF5">
    <property type="entry name" value="ARGININE--TRNA LIGASE, CYTOPLASMIC"/>
    <property type="match status" value="1"/>
</dbReference>
<dbReference type="PANTHER" id="PTHR11956">
    <property type="entry name" value="ARGINYL-TRNA SYNTHETASE"/>
    <property type="match status" value="1"/>
</dbReference>
<dbReference type="Pfam" id="PF03485">
    <property type="entry name" value="Arg_tRNA_synt_N"/>
    <property type="match status" value="1"/>
</dbReference>
<dbReference type="Pfam" id="PF05746">
    <property type="entry name" value="DALR_1"/>
    <property type="match status" value="1"/>
</dbReference>
<dbReference type="Pfam" id="PF00750">
    <property type="entry name" value="tRNA-synt_1d"/>
    <property type="match status" value="1"/>
</dbReference>
<dbReference type="PRINTS" id="PR01038">
    <property type="entry name" value="TRNASYNTHARG"/>
</dbReference>
<dbReference type="SMART" id="SM01016">
    <property type="entry name" value="Arg_tRNA_synt_N"/>
    <property type="match status" value="1"/>
</dbReference>
<dbReference type="SMART" id="SM00836">
    <property type="entry name" value="DALR_1"/>
    <property type="match status" value="1"/>
</dbReference>
<dbReference type="SUPFAM" id="SSF47323">
    <property type="entry name" value="Anticodon-binding domain of a subclass of class I aminoacyl-tRNA synthetases"/>
    <property type="match status" value="1"/>
</dbReference>
<dbReference type="SUPFAM" id="SSF55190">
    <property type="entry name" value="Arginyl-tRNA synthetase (ArgRS), N-terminal 'additional' domain"/>
    <property type="match status" value="1"/>
</dbReference>
<dbReference type="SUPFAM" id="SSF52374">
    <property type="entry name" value="Nucleotidylyl transferase"/>
    <property type="match status" value="1"/>
</dbReference>
<dbReference type="PROSITE" id="PS00178">
    <property type="entry name" value="AA_TRNA_LIGASE_I"/>
    <property type="match status" value="1"/>
</dbReference>
<comment type="catalytic activity">
    <reaction evidence="1">
        <text>tRNA(Arg) + L-arginine + ATP = L-arginyl-tRNA(Arg) + AMP + diphosphate</text>
        <dbReference type="Rhea" id="RHEA:20301"/>
        <dbReference type="Rhea" id="RHEA-COMP:9658"/>
        <dbReference type="Rhea" id="RHEA-COMP:9673"/>
        <dbReference type="ChEBI" id="CHEBI:30616"/>
        <dbReference type="ChEBI" id="CHEBI:32682"/>
        <dbReference type="ChEBI" id="CHEBI:33019"/>
        <dbReference type="ChEBI" id="CHEBI:78442"/>
        <dbReference type="ChEBI" id="CHEBI:78513"/>
        <dbReference type="ChEBI" id="CHEBI:456215"/>
        <dbReference type="EC" id="6.1.1.19"/>
    </reaction>
</comment>
<comment type="subunit">
    <text evidence="1">Monomer.</text>
</comment>
<comment type="subcellular location">
    <subcellularLocation>
        <location evidence="1">Cytoplasm</location>
    </subcellularLocation>
</comment>
<comment type="similarity">
    <text evidence="1">Belongs to the class-I aminoacyl-tRNA synthetase family.</text>
</comment>
<feature type="chain" id="PRO_0000242032" description="Arginine--tRNA ligase">
    <location>
        <begin position="1"/>
        <end position="580"/>
    </location>
</feature>
<feature type="short sequence motif" description="'HIGH' region">
    <location>
        <begin position="127"/>
        <end position="137"/>
    </location>
</feature>
<protein>
    <recommendedName>
        <fullName evidence="1">Arginine--tRNA ligase</fullName>
        <ecNumber evidence="1">6.1.1.19</ecNumber>
    </recommendedName>
    <alternativeName>
        <fullName evidence="1">Arginyl-tRNA synthetase</fullName>
        <shortName evidence="1">ArgRS</shortName>
    </alternativeName>
</protein>
<accession>Q5QV46</accession>
<keyword id="KW-0030">Aminoacyl-tRNA synthetase</keyword>
<keyword id="KW-0067">ATP-binding</keyword>
<keyword id="KW-0963">Cytoplasm</keyword>
<keyword id="KW-0436">Ligase</keyword>
<keyword id="KW-0547">Nucleotide-binding</keyword>
<keyword id="KW-0648">Protein biosynthesis</keyword>
<keyword id="KW-1185">Reference proteome</keyword>
<reference key="1">
    <citation type="journal article" date="2004" name="Proc. Natl. Acad. Sci. U.S.A.">
        <title>Genome sequence of the deep-sea gamma-proteobacterium Idiomarina loihiensis reveals amino acid fermentation as a source of carbon and energy.</title>
        <authorList>
            <person name="Hou S."/>
            <person name="Saw J.H."/>
            <person name="Lee K.S."/>
            <person name="Freitas T.A."/>
            <person name="Belisle C."/>
            <person name="Kawarabayasi Y."/>
            <person name="Donachie S.P."/>
            <person name="Pikina A."/>
            <person name="Galperin M.Y."/>
            <person name="Koonin E.V."/>
            <person name="Makarova K.S."/>
            <person name="Omelchenko M.V."/>
            <person name="Sorokin A."/>
            <person name="Wolf Y.I."/>
            <person name="Li Q.X."/>
            <person name="Keum Y.S."/>
            <person name="Campbell S."/>
            <person name="Denery J."/>
            <person name="Aizawa S."/>
            <person name="Shibata S."/>
            <person name="Malahoff A."/>
            <person name="Alam M."/>
        </authorList>
    </citation>
    <scope>NUCLEOTIDE SEQUENCE [LARGE SCALE GENOMIC DNA]</scope>
    <source>
        <strain>ATCC BAA-735 / DSM 15497 / L2-TR</strain>
    </source>
</reference>
<proteinExistence type="inferred from homology"/>
<sequence>MKEQLEQLLAEAIGQLKAQGTIPADHSVNIQLDRPRDKSHGDFATNLALMLAKPAKSNPRQLAEAIVAAVPENSLLSKMDIAGPGFINFTISQDQLKDQLTAMLNSDSLNVDVAEESKTIVIDYSSPNLAKEMHVGHLRSAIIGDAVSRVCEFLGHKVIRQNHVGDWGTQFGMLLAYMEALDNQSAEYELSNLETFYKAAKQRFDESEEFADRARQLVVKLQSGDEYCLKLWNQFIDVSLSHCQDVYDRLGVKLTRDDVMAESAYNDKLPGVIEHLREKGLLTEDQGAQCVFLEEYKGKEGEPLPIIVQKKGGGYLYATTDLAAIEYRQKELGGDHLMYFVDARQALHFDQIFTLARKAGFVEGDIQLNHYGFGTVMGKDGKPYKSRDGGVTKLADLLDEAERRALELLQQKTTDLSEEQQKRVAEVVGISSVKYADLSKNRTSDYVFDWNHMLTFEGNTAPYLLYAFTRVNSIFDRLGDTAFDRNADIILSDERELALANQLVRFNEVLHQVQDKAMPHFLCGFLFDLAGRFSSFYEACPILNQEDEALRNSRLKLSMLTANVLKQGLELLGIPTLEKM</sequence>
<gene>
    <name evidence="1" type="primary">argS</name>
    <name type="ordered locus">IL2460</name>
</gene>
<name>SYR_IDILO</name>